<comment type="function">
    <text evidence="1">One of several proteins that assist in the late maturation steps of the functional core of the 30S ribosomal subunit. Associates with free 30S ribosomal subunits (but not with 30S subunits that are part of 70S ribosomes or polysomes). Required for efficient processing of 16S rRNA. May interact with the 5'-terminal helix region of 16S rRNA.</text>
</comment>
<comment type="subunit">
    <text evidence="1">Monomer. Binds 30S ribosomal subunits, but not 50S ribosomal subunits or 70S ribosomes.</text>
</comment>
<comment type="subcellular location">
    <subcellularLocation>
        <location evidence="1">Cytoplasm</location>
    </subcellularLocation>
</comment>
<comment type="similarity">
    <text evidence="1">Belongs to the RbfA family.</text>
</comment>
<dbReference type="EMBL" id="CP000050">
    <property type="protein sequence ID" value="AAY48672.1"/>
    <property type="molecule type" value="Genomic_DNA"/>
</dbReference>
<dbReference type="SMR" id="Q4UWA1"/>
<dbReference type="KEGG" id="xcb:XC_1606"/>
<dbReference type="HOGENOM" id="CLU_089475_6_3_6"/>
<dbReference type="Proteomes" id="UP000000420">
    <property type="component" value="Chromosome"/>
</dbReference>
<dbReference type="GO" id="GO:0005829">
    <property type="term" value="C:cytosol"/>
    <property type="evidence" value="ECO:0007669"/>
    <property type="project" value="TreeGrafter"/>
</dbReference>
<dbReference type="GO" id="GO:0043024">
    <property type="term" value="F:ribosomal small subunit binding"/>
    <property type="evidence" value="ECO:0007669"/>
    <property type="project" value="TreeGrafter"/>
</dbReference>
<dbReference type="GO" id="GO:0030490">
    <property type="term" value="P:maturation of SSU-rRNA"/>
    <property type="evidence" value="ECO:0007669"/>
    <property type="project" value="UniProtKB-UniRule"/>
</dbReference>
<dbReference type="FunFam" id="3.30.300.20:FF:000022">
    <property type="entry name" value="Ribosome-binding factor A"/>
    <property type="match status" value="1"/>
</dbReference>
<dbReference type="Gene3D" id="3.30.300.20">
    <property type="match status" value="1"/>
</dbReference>
<dbReference type="HAMAP" id="MF_00003">
    <property type="entry name" value="RbfA"/>
    <property type="match status" value="1"/>
</dbReference>
<dbReference type="InterPro" id="IPR015946">
    <property type="entry name" value="KH_dom-like_a/b"/>
</dbReference>
<dbReference type="InterPro" id="IPR000238">
    <property type="entry name" value="RbfA"/>
</dbReference>
<dbReference type="InterPro" id="IPR023799">
    <property type="entry name" value="RbfA_dom_sf"/>
</dbReference>
<dbReference type="InterPro" id="IPR020053">
    <property type="entry name" value="Ribosome-bd_factorA_CS"/>
</dbReference>
<dbReference type="NCBIfam" id="TIGR00082">
    <property type="entry name" value="rbfA"/>
    <property type="match status" value="1"/>
</dbReference>
<dbReference type="PANTHER" id="PTHR33515">
    <property type="entry name" value="RIBOSOME-BINDING FACTOR A, CHLOROPLASTIC-RELATED"/>
    <property type="match status" value="1"/>
</dbReference>
<dbReference type="PANTHER" id="PTHR33515:SF1">
    <property type="entry name" value="RIBOSOME-BINDING FACTOR A, CHLOROPLASTIC-RELATED"/>
    <property type="match status" value="1"/>
</dbReference>
<dbReference type="Pfam" id="PF02033">
    <property type="entry name" value="RBFA"/>
    <property type="match status" value="1"/>
</dbReference>
<dbReference type="SUPFAM" id="SSF89919">
    <property type="entry name" value="Ribosome-binding factor A, RbfA"/>
    <property type="match status" value="1"/>
</dbReference>
<dbReference type="PROSITE" id="PS01319">
    <property type="entry name" value="RBFA"/>
    <property type="match status" value="1"/>
</dbReference>
<gene>
    <name evidence="1" type="primary">rbfA</name>
    <name type="ordered locus">XC_1606</name>
</gene>
<reference key="1">
    <citation type="journal article" date="2005" name="Genome Res.">
        <title>Comparative and functional genomic analyses of the pathogenicity of phytopathogen Xanthomonas campestris pv. campestris.</title>
        <authorList>
            <person name="Qian W."/>
            <person name="Jia Y."/>
            <person name="Ren S.-X."/>
            <person name="He Y.-Q."/>
            <person name="Feng J.-X."/>
            <person name="Lu L.-F."/>
            <person name="Sun Q."/>
            <person name="Ying G."/>
            <person name="Tang D.-J."/>
            <person name="Tang H."/>
            <person name="Wu W."/>
            <person name="Hao P."/>
            <person name="Wang L."/>
            <person name="Jiang B.-L."/>
            <person name="Zeng S."/>
            <person name="Gu W.-Y."/>
            <person name="Lu G."/>
            <person name="Rong L."/>
            <person name="Tian Y."/>
            <person name="Yao Z."/>
            <person name="Fu G."/>
            <person name="Chen B."/>
            <person name="Fang R."/>
            <person name="Qiang B."/>
            <person name="Chen Z."/>
            <person name="Zhao G.-P."/>
            <person name="Tang J.-L."/>
            <person name="He C."/>
        </authorList>
    </citation>
    <scope>NUCLEOTIDE SEQUENCE [LARGE SCALE GENOMIC DNA]</scope>
    <source>
        <strain>8004</strain>
    </source>
</reference>
<organism>
    <name type="scientific">Xanthomonas campestris pv. campestris (strain 8004)</name>
    <dbReference type="NCBI Taxonomy" id="314565"/>
    <lineage>
        <taxon>Bacteria</taxon>
        <taxon>Pseudomonadati</taxon>
        <taxon>Pseudomonadota</taxon>
        <taxon>Gammaproteobacteria</taxon>
        <taxon>Lysobacterales</taxon>
        <taxon>Lysobacteraceae</taxon>
        <taxon>Xanthomonas</taxon>
    </lineage>
</organism>
<feature type="chain" id="PRO_0000321269" description="Ribosome-binding factor A">
    <location>
        <begin position="1"/>
        <end position="132"/>
    </location>
</feature>
<accession>Q4UWA1</accession>
<protein>
    <recommendedName>
        <fullName evidence="1">Ribosome-binding factor A</fullName>
    </recommendedName>
</protein>
<evidence type="ECO:0000255" key="1">
    <source>
        <dbReference type="HAMAP-Rule" id="MF_00003"/>
    </source>
</evidence>
<name>RBFA_XANC8</name>
<proteinExistence type="inferred from homology"/>
<sequence>MTMPTKSFHRTDRVSAQVRRDLGTIVHAAVRDHGLPSVSVSDVEISRDLAHAKVFVTALQQERSAEAVKGLKEIAGQLRTQLARAMKLRHVPELHFHYDDSVDRGERIDNLLRDLDDIGPEAAPDAQDAEPR</sequence>
<keyword id="KW-0963">Cytoplasm</keyword>
<keyword id="KW-0690">Ribosome biogenesis</keyword>